<accession>A8NSD1</accession>
<organism>
    <name type="scientific">Coprinopsis cinerea (strain Okayama-7 / 130 / ATCC MYA-4618 / FGSC 9003)</name>
    <name type="common">Inky cap fungus</name>
    <name type="synonym">Hormographiella aspergillata</name>
    <dbReference type="NCBI Taxonomy" id="240176"/>
    <lineage>
        <taxon>Eukaryota</taxon>
        <taxon>Fungi</taxon>
        <taxon>Dikarya</taxon>
        <taxon>Basidiomycota</taxon>
        <taxon>Agaricomycotina</taxon>
        <taxon>Agaricomycetes</taxon>
        <taxon>Agaricomycetidae</taxon>
        <taxon>Agaricales</taxon>
        <taxon>Agaricineae</taxon>
        <taxon>Psathyrellaceae</taxon>
        <taxon>Coprinopsis</taxon>
    </lineage>
</organism>
<keyword id="KW-0963">Cytoplasm</keyword>
<keyword id="KW-0408">Iron</keyword>
<keyword id="KW-0479">Metal-binding</keyword>
<keyword id="KW-0520">NAD</keyword>
<keyword id="KW-0539">Nucleus</keyword>
<keyword id="KW-1185">Reference proteome</keyword>
<keyword id="KW-0784">Thiamine biosynthesis</keyword>
<keyword id="KW-0808">Transferase</keyword>
<protein>
    <recommendedName>
        <fullName evidence="1">Thiamine thiazole synthase</fullName>
        <ecNumber evidence="1">2.4.2.60</ecNumber>
    </recommendedName>
    <alternativeName>
        <fullName evidence="1">Thiazole biosynthetic enzyme</fullName>
    </alternativeName>
</protein>
<name>THI4_COPC7</name>
<feature type="chain" id="PRO_0000415873" description="Thiamine thiazole synthase">
    <location>
        <begin position="1"/>
        <end position="313"/>
    </location>
</feature>
<feature type="binding site" evidence="1">
    <location>
        <position position="71"/>
    </location>
    <ligand>
        <name>substrate</name>
    </ligand>
</feature>
<feature type="binding site" evidence="1">
    <location>
        <begin position="92"/>
        <end position="93"/>
    </location>
    <ligand>
        <name>substrate</name>
    </ligand>
</feature>
<feature type="binding site" evidence="1">
    <location>
        <position position="100"/>
    </location>
    <ligand>
        <name>substrate</name>
    </ligand>
</feature>
<feature type="binding site" evidence="1">
    <location>
        <position position="165"/>
    </location>
    <ligand>
        <name>substrate</name>
    </ligand>
</feature>
<feature type="binding site" evidence="1">
    <location>
        <position position="201"/>
    </location>
    <ligand>
        <name>substrate</name>
    </ligand>
</feature>
<feature type="binding site" evidence="1">
    <location>
        <position position="216"/>
    </location>
    <ligand>
        <name>substrate</name>
    </ligand>
</feature>
<feature type="binding site" evidence="1">
    <location>
        <position position="268"/>
    </location>
    <ligand>
        <name>substrate</name>
    </ligand>
</feature>
<feature type="binding site" evidence="1">
    <location>
        <begin position="278"/>
        <end position="280"/>
    </location>
    <ligand>
        <name>substrate</name>
    </ligand>
</feature>
<feature type="modified residue" description="2,3-didehydroalanine (Cys)" evidence="1">
    <location>
        <position position="199"/>
    </location>
</feature>
<evidence type="ECO:0000255" key="1">
    <source>
        <dbReference type="HAMAP-Rule" id="MF_03158"/>
    </source>
</evidence>
<comment type="function">
    <text evidence="1">Involved in biosynthesis of the thiamine precursor thiazole. Catalyzes the conversion of NAD and glycine to adenosine diphosphate 5-(2-hydroxyethyl)-4-methylthiazole-2-carboxylic acid (ADT), an adenylated thiazole intermediate. The reaction includes an iron-dependent sulfide transfer from a conserved cysteine residue of the protein to a thiazole intermediate. The enzyme can only undergo a single turnover, which suggests it is a suicide enzyme. May have additional roles in adaptation to various stress conditions and in DNA damage tolerance.</text>
</comment>
<comment type="catalytic activity">
    <reaction evidence="1">
        <text>[ADP-thiazole synthase]-L-cysteine + glycine + NAD(+) = [ADP-thiazole synthase]-dehydroalanine + ADP-5-ethyl-4-methylthiazole-2-carboxylate + nicotinamide + 3 H2O + 2 H(+)</text>
        <dbReference type="Rhea" id="RHEA:55708"/>
        <dbReference type="Rhea" id="RHEA-COMP:14264"/>
        <dbReference type="Rhea" id="RHEA-COMP:14265"/>
        <dbReference type="ChEBI" id="CHEBI:15377"/>
        <dbReference type="ChEBI" id="CHEBI:15378"/>
        <dbReference type="ChEBI" id="CHEBI:17154"/>
        <dbReference type="ChEBI" id="CHEBI:29950"/>
        <dbReference type="ChEBI" id="CHEBI:57305"/>
        <dbReference type="ChEBI" id="CHEBI:57540"/>
        <dbReference type="ChEBI" id="CHEBI:90873"/>
        <dbReference type="ChEBI" id="CHEBI:139151"/>
        <dbReference type="EC" id="2.4.2.60"/>
    </reaction>
</comment>
<comment type="cofactor">
    <cofactor evidence="1">
        <name>Fe cation</name>
        <dbReference type="ChEBI" id="CHEBI:24875"/>
    </cofactor>
    <text evidence="1">Binds 1 Fe cation per subunit.</text>
</comment>
<comment type="subunit">
    <text evidence="1">Homooctamer.</text>
</comment>
<comment type="subcellular location">
    <subcellularLocation>
        <location evidence="1">Cytoplasm</location>
    </subcellularLocation>
    <subcellularLocation>
        <location evidence="1">Nucleus</location>
    </subcellularLocation>
</comment>
<comment type="PTM">
    <text evidence="1">During the catalytic reaction, a sulfide is transferred from Cys-199 to a reaction intermediate, generating a dehydroalanine residue.</text>
</comment>
<comment type="similarity">
    <text evidence="1">Belongs to the THI4 family.</text>
</comment>
<proteinExistence type="inferred from homology"/>
<reference key="1">
    <citation type="journal article" date="2010" name="Proc. Natl. Acad. Sci. U.S.A.">
        <title>Insights into evolution of multicellular fungi from the assembled chromosomes of the mushroom Coprinopsis cinerea (Coprinus cinereus).</title>
        <authorList>
            <person name="Stajich J.E."/>
            <person name="Wilke S.K."/>
            <person name="Ahren D."/>
            <person name="Au C.H."/>
            <person name="Birren B.W."/>
            <person name="Borodovsky M."/>
            <person name="Burns C."/>
            <person name="Canbaeck B."/>
            <person name="Casselton L.A."/>
            <person name="Cheng C.K."/>
            <person name="Deng J."/>
            <person name="Dietrich F.S."/>
            <person name="Fargo D.C."/>
            <person name="Farman M.L."/>
            <person name="Gathman A.C."/>
            <person name="Goldberg J."/>
            <person name="Guigo R."/>
            <person name="Hoegger P.J."/>
            <person name="Hooker J.B."/>
            <person name="Huggins A."/>
            <person name="James T.Y."/>
            <person name="Kamada T."/>
            <person name="Kilaru S."/>
            <person name="Kodira C."/>
            <person name="Kuees U."/>
            <person name="Kupfer D."/>
            <person name="Kwan H.S."/>
            <person name="Lomsadze A."/>
            <person name="Li W."/>
            <person name="Lilly W.W."/>
            <person name="Ma L.-J."/>
            <person name="Mackey A.J."/>
            <person name="Manning G."/>
            <person name="Martin F."/>
            <person name="Muraguchi H."/>
            <person name="Natvig D.O."/>
            <person name="Palmerini H."/>
            <person name="Ramesh M.A."/>
            <person name="Rehmeyer C.J."/>
            <person name="Roe B.A."/>
            <person name="Shenoy N."/>
            <person name="Stanke M."/>
            <person name="Ter-Hovhannisyan V."/>
            <person name="Tunlid A."/>
            <person name="Velagapudi R."/>
            <person name="Vision T.J."/>
            <person name="Zeng Q."/>
            <person name="Zolan M.E."/>
            <person name="Pukkila P.J."/>
        </authorList>
    </citation>
    <scope>NUCLEOTIDE SEQUENCE [LARGE SCALE GENOMIC DNA]</scope>
    <source>
        <strain>Okayama-7 / 130 / ATCC MYA-4618 / FGSC 9003</strain>
    </source>
</reference>
<gene>
    <name type="ORF">CC1G_04976</name>
</gene>
<dbReference type="EC" id="2.4.2.60" evidence="1"/>
<dbReference type="EMBL" id="AACS02000008">
    <property type="protein sequence ID" value="EAU85759.2"/>
    <property type="molecule type" value="Genomic_DNA"/>
</dbReference>
<dbReference type="RefSeq" id="XP_001835983.2">
    <property type="nucleotide sequence ID" value="XM_001835931.2"/>
</dbReference>
<dbReference type="SMR" id="A8NSD1"/>
<dbReference type="FunCoup" id="A8NSD1">
    <property type="interactions" value="488"/>
</dbReference>
<dbReference type="STRING" id="240176.A8NSD1"/>
<dbReference type="GeneID" id="6012523"/>
<dbReference type="KEGG" id="cci:CC1G_04976"/>
<dbReference type="VEuPathDB" id="FungiDB:CC1G_04976"/>
<dbReference type="eggNOG" id="KOG2960">
    <property type="taxonomic scope" value="Eukaryota"/>
</dbReference>
<dbReference type="HOGENOM" id="CLU_053727_0_0_1"/>
<dbReference type="InParanoid" id="A8NSD1"/>
<dbReference type="OMA" id="MFPRIVV"/>
<dbReference type="OrthoDB" id="410463at2759"/>
<dbReference type="Proteomes" id="UP000001861">
    <property type="component" value="Unassembled WGS sequence"/>
</dbReference>
<dbReference type="GO" id="GO:0005829">
    <property type="term" value="C:cytosol"/>
    <property type="evidence" value="ECO:0007669"/>
    <property type="project" value="UniProtKB-UniRule"/>
</dbReference>
<dbReference type="GO" id="GO:0005634">
    <property type="term" value="C:nucleus"/>
    <property type="evidence" value="ECO:0007669"/>
    <property type="project" value="UniProtKB-SubCell"/>
</dbReference>
<dbReference type="GO" id="GO:0160205">
    <property type="term" value="F:cysteine-dependent adenosine diphosphate thiazole synthase activity"/>
    <property type="evidence" value="ECO:0007669"/>
    <property type="project" value="UniProtKB-EC"/>
</dbReference>
<dbReference type="GO" id="GO:0005506">
    <property type="term" value="F:iron ion binding"/>
    <property type="evidence" value="ECO:0007669"/>
    <property type="project" value="UniProtKB-UniRule"/>
</dbReference>
<dbReference type="GO" id="GO:0009228">
    <property type="term" value="P:thiamine biosynthetic process"/>
    <property type="evidence" value="ECO:0007669"/>
    <property type="project" value="UniProtKB-UniRule"/>
</dbReference>
<dbReference type="GO" id="GO:0052837">
    <property type="term" value="P:thiazole biosynthetic process"/>
    <property type="evidence" value="ECO:0007669"/>
    <property type="project" value="UniProtKB-UniRule"/>
</dbReference>
<dbReference type="Gene3D" id="6.10.250.2840">
    <property type="match status" value="1"/>
</dbReference>
<dbReference type="Gene3D" id="3.50.50.60">
    <property type="entry name" value="FAD/NAD(P)-binding domain"/>
    <property type="match status" value="1"/>
</dbReference>
<dbReference type="HAMAP" id="MF_03158">
    <property type="entry name" value="THI4"/>
    <property type="match status" value="1"/>
</dbReference>
<dbReference type="InterPro" id="IPR036188">
    <property type="entry name" value="FAD/NAD-bd_sf"/>
</dbReference>
<dbReference type="InterPro" id="IPR027495">
    <property type="entry name" value="Sti35"/>
</dbReference>
<dbReference type="InterPro" id="IPR002922">
    <property type="entry name" value="Thi4_fam"/>
</dbReference>
<dbReference type="NCBIfam" id="TIGR00292">
    <property type="entry name" value="sulfide-dependent adenosine diphosphate thiazole synthase"/>
    <property type="match status" value="1"/>
</dbReference>
<dbReference type="PANTHER" id="PTHR43422">
    <property type="entry name" value="THIAMINE THIAZOLE SYNTHASE"/>
    <property type="match status" value="1"/>
</dbReference>
<dbReference type="PANTHER" id="PTHR43422:SF3">
    <property type="entry name" value="THIAMINE THIAZOLE SYNTHASE"/>
    <property type="match status" value="1"/>
</dbReference>
<dbReference type="Pfam" id="PF01946">
    <property type="entry name" value="Thi4"/>
    <property type="match status" value="1"/>
</dbReference>
<dbReference type="SUPFAM" id="SSF51905">
    <property type="entry name" value="FAD/NAD(P)-binding domain"/>
    <property type="match status" value="1"/>
</dbReference>
<sequence length="313" mass="33353">MAPALTLEKPVETNAFPRKAASVETSENYEGNYKFAPIEEAQVSRAMIKRYFNTMYDRAISDVVIVGAGSAGLSCAYSLATQRPDLKITIVEAGVAPGGGAWLGGQLMTPMVIRKPADAFLRELGVPYEDEGNFVVVKHAALFTSTLLSKVLAKPNVVMMNATAVEDLIVHEDFAGQQRVAGVVTNWTLVALNHDTQSCMDPNTITAPVIVSATGHDGPMGAFSAKRLVSTGLLKELGNMRGLDMNRAEPAIVNGTREVVPGLILTGMELSEHDGSNRMGPTFGAMIGSGHKAAHEAIRILDRHKVVNGKVVA</sequence>